<keyword id="KW-0665">Pyrimidine biosynthesis</keyword>
<keyword id="KW-1185">Reference proteome</keyword>
<keyword id="KW-0808">Transferase</keyword>
<feature type="chain" id="PRO_0000321098" description="Aspartate carbamoyltransferase catalytic subunit">
    <location>
        <begin position="1"/>
        <end position="312"/>
    </location>
</feature>
<feature type="binding site" evidence="1">
    <location>
        <position position="58"/>
    </location>
    <ligand>
        <name>carbamoyl phosphate</name>
        <dbReference type="ChEBI" id="CHEBI:58228"/>
    </ligand>
</feature>
<feature type="binding site" evidence="1">
    <location>
        <position position="59"/>
    </location>
    <ligand>
        <name>carbamoyl phosphate</name>
        <dbReference type="ChEBI" id="CHEBI:58228"/>
    </ligand>
</feature>
<feature type="binding site" evidence="1">
    <location>
        <position position="86"/>
    </location>
    <ligand>
        <name>L-aspartate</name>
        <dbReference type="ChEBI" id="CHEBI:29991"/>
    </ligand>
</feature>
<feature type="binding site" evidence="1">
    <location>
        <position position="108"/>
    </location>
    <ligand>
        <name>carbamoyl phosphate</name>
        <dbReference type="ChEBI" id="CHEBI:58228"/>
    </ligand>
</feature>
<feature type="binding site" evidence="1">
    <location>
        <position position="136"/>
    </location>
    <ligand>
        <name>carbamoyl phosphate</name>
        <dbReference type="ChEBI" id="CHEBI:58228"/>
    </ligand>
</feature>
<feature type="binding site" evidence="1">
    <location>
        <position position="139"/>
    </location>
    <ligand>
        <name>carbamoyl phosphate</name>
        <dbReference type="ChEBI" id="CHEBI:58228"/>
    </ligand>
</feature>
<feature type="binding site" evidence="1">
    <location>
        <position position="169"/>
    </location>
    <ligand>
        <name>L-aspartate</name>
        <dbReference type="ChEBI" id="CHEBI:29991"/>
    </ligand>
</feature>
<feature type="binding site" evidence="1">
    <location>
        <position position="223"/>
    </location>
    <ligand>
        <name>L-aspartate</name>
        <dbReference type="ChEBI" id="CHEBI:29991"/>
    </ligand>
</feature>
<feature type="binding site" evidence="1">
    <location>
        <position position="264"/>
    </location>
    <ligand>
        <name>carbamoyl phosphate</name>
        <dbReference type="ChEBI" id="CHEBI:58228"/>
    </ligand>
</feature>
<feature type="binding site" evidence="1">
    <location>
        <position position="265"/>
    </location>
    <ligand>
        <name>carbamoyl phosphate</name>
        <dbReference type="ChEBI" id="CHEBI:58228"/>
    </ligand>
</feature>
<gene>
    <name evidence="1" type="primary">pyrB</name>
    <name type="ordered locus">DSY2862</name>
</gene>
<evidence type="ECO:0000255" key="1">
    <source>
        <dbReference type="HAMAP-Rule" id="MF_00001"/>
    </source>
</evidence>
<sequence>MGWSRKDLLHIEDLPAKEIQLILNTAKPMKEIMSRAVKKLPTFRGKSVYNLFFESSTRTRTSFETAAKILGADTSSLAVAQSSLNKGETLLDTVRTLQAMKPDLVVIRHSSSGAAQFLAKELKAGVINAGDGQHEHPTQALLDLYTMQERLGSVEGRKILLVGDILHSRVARSNVWALKNLGAEVVLVGPPTLLPPEIKSWGVKTTFNLDEELPGSDVIMALRLQLERQQSGLLPSLREYSQLYGITAERVKKTGKQTLIMHPGPVNRGVEIESSIANSSQSVIEEQVTNGVAVRMAIMYLLLGGGTAHVVD</sequence>
<proteinExistence type="inferred from homology"/>
<protein>
    <recommendedName>
        <fullName evidence="1">Aspartate carbamoyltransferase catalytic subunit</fullName>
        <ecNumber evidence="1">2.1.3.2</ecNumber>
    </recommendedName>
    <alternativeName>
        <fullName evidence="1">Aspartate transcarbamylase</fullName>
        <shortName evidence="1">ATCase</shortName>
    </alternativeName>
</protein>
<reference key="1">
    <citation type="journal article" date="2006" name="J. Bacteriol.">
        <title>Complete genome sequence of the dehalorespiring bacterium Desulfitobacterium hafniense Y51 and comparison with Dehalococcoides ethenogenes 195.</title>
        <authorList>
            <person name="Nonaka H."/>
            <person name="Keresztes G."/>
            <person name="Shinoda Y."/>
            <person name="Ikenaga Y."/>
            <person name="Abe M."/>
            <person name="Naito K."/>
            <person name="Inatomi K."/>
            <person name="Furukawa K."/>
            <person name="Inui M."/>
            <person name="Yukawa H."/>
        </authorList>
    </citation>
    <scope>NUCLEOTIDE SEQUENCE [LARGE SCALE GENOMIC DNA]</scope>
    <source>
        <strain>Y51</strain>
    </source>
</reference>
<name>PYRB_DESHY</name>
<accession>Q24TJ1</accession>
<organism>
    <name type="scientific">Desulfitobacterium hafniense (strain Y51)</name>
    <dbReference type="NCBI Taxonomy" id="138119"/>
    <lineage>
        <taxon>Bacteria</taxon>
        <taxon>Bacillati</taxon>
        <taxon>Bacillota</taxon>
        <taxon>Clostridia</taxon>
        <taxon>Eubacteriales</taxon>
        <taxon>Desulfitobacteriaceae</taxon>
        <taxon>Desulfitobacterium</taxon>
    </lineage>
</organism>
<comment type="function">
    <text evidence="1">Catalyzes the condensation of carbamoyl phosphate and aspartate to form carbamoyl aspartate and inorganic phosphate, the committed step in the de novo pyrimidine nucleotide biosynthesis pathway.</text>
</comment>
<comment type="catalytic activity">
    <reaction evidence="1">
        <text>carbamoyl phosphate + L-aspartate = N-carbamoyl-L-aspartate + phosphate + H(+)</text>
        <dbReference type="Rhea" id="RHEA:20013"/>
        <dbReference type="ChEBI" id="CHEBI:15378"/>
        <dbReference type="ChEBI" id="CHEBI:29991"/>
        <dbReference type="ChEBI" id="CHEBI:32814"/>
        <dbReference type="ChEBI" id="CHEBI:43474"/>
        <dbReference type="ChEBI" id="CHEBI:58228"/>
        <dbReference type="EC" id="2.1.3.2"/>
    </reaction>
</comment>
<comment type="pathway">
    <text evidence="1">Pyrimidine metabolism; UMP biosynthesis via de novo pathway; (S)-dihydroorotate from bicarbonate: step 2/3.</text>
</comment>
<comment type="subunit">
    <text evidence="1">Heterododecamer (2C3:3R2) of six catalytic PyrB chains organized as two trimers (C3), and six regulatory PyrI chains organized as three dimers (R2).</text>
</comment>
<comment type="similarity">
    <text evidence="1">Belongs to the aspartate/ornithine carbamoyltransferase superfamily. ATCase family.</text>
</comment>
<dbReference type="EC" id="2.1.3.2" evidence="1"/>
<dbReference type="EMBL" id="AP008230">
    <property type="protein sequence ID" value="BAE84651.1"/>
    <property type="molecule type" value="Genomic_DNA"/>
</dbReference>
<dbReference type="RefSeq" id="WP_011460660.1">
    <property type="nucleotide sequence ID" value="NC_007907.1"/>
</dbReference>
<dbReference type="SMR" id="Q24TJ1"/>
<dbReference type="STRING" id="138119.DSY2862"/>
<dbReference type="KEGG" id="dsy:DSY2862"/>
<dbReference type="eggNOG" id="COG0540">
    <property type="taxonomic scope" value="Bacteria"/>
</dbReference>
<dbReference type="HOGENOM" id="CLU_043846_2_0_9"/>
<dbReference type="UniPathway" id="UPA00070">
    <property type="reaction ID" value="UER00116"/>
</dbReference>
<dbReference type="Proteomes" id="UP000001946">
    <property type="component" value="Chromosome"/>
</dbReference>
<dbReference type="GO" id="GO:0005829">
    <property type="term" value="C:cytosol"/>
    <property type="evidence" value="ECO:0007669"/>
    <property type="project" value="TreeGrafter"/>
</dbReference>
<dbReference type="GO" id="GO:0016597">
    <property type="term" value="F:amino acid binding"/>
    <property type="evidence" value="ECO:0007669"/>
    <property type="project" value="InterPro"/>
</dbReference>
<dbReference type="GO" id="GO:0004070">
    <property type="term" value="F:aspartate carbamoyltransferase activity"/>
    <property type="evidence" value="ECO:0007669"/>
    <property type="project" value="UniProtKB-UniRule"/>
</dbReference>
<dbReference type="GO" id="GO:0006207">
    <property type="term" value="P:'de novo' pyrimidine nucleobase biosynthetic process"/>
    <property type="evidence" value="ECO:0007669"/>
    <property type="project" value="InterPro"/>
</dbReference>
<dbReference type="GO" id="GO:0044205">
    <property type="term" value="P:'de novo' UMP biosynthetic process"/>
    <property type="evidence" value="ECO:0007669"/>
    <property type="project" value="UniProtKB-UniRule"/>
</dbReference>
<dbReference type="GO" id="GO:0006520">
    <property type="term" value="P:amino acid metabolic process"/>
    <property type="evidence" value="ECO:0007669"/>
    <property type="project" value="InterPro"/>
</dbReference>
<dbReference type="FunFam" id="3.40.50.1370:FF:000007">
    <property type="entry name" value="Aspartate carbamoyltransferase"/>
    <property type="match status" value="1"/>
</dbReference>
<dbReference type="Gene3D" id="3.40.50.1370">
    <property type="entry name" value="Aspartate/ornithine carbamoyltransferase"/>
    <property type="match status" value="2"/>
</dbReference>
<dbReference type="HAMAP" id="MF_00001">
    <property type="entry name" value="Asp_carb_tr"/>
    <property type="match status" value="1"/>
</dbReference>
<dbReference type="InterPro" id="IPR006132">
    <property type="entry name" value="Asp/Orn_carbamoyltranf_P-bd"/>
</dbReference>
<dbReference type="InterPro" id="IPR006130">
    <property type="entry name" value="Asp/Orn_carbamoylTrfase"/>
</dbReference>
<dbReference type="InterPro" id="IPR036901">
    <property type="entry name" value="Asp/Orn_carbamoylTrfase_sf"/>
</dbReference>
<dbReference type="InterPro" id="IPR002082">
    <property type="entry name" value="Asp_carbamoyltransf"/>
</dbReference>
<dbReference type="InterPro" id="IPR006131">
    <property type="entry name" value="Asp_carbamoyltransf_Asp/Orn-bd"/>
</dbReference>
<dbReference type="NCBIfam" id="TIGR00670">
    <property type="entry name" value="asp_carb_tr"/>
    <property type="match status" value="1"/>
</dbReference>
<dbReference type="NCBIfam" id="NF002032">
    <property type="entry name" value="PRK00856.1"/>
    <property type="match status" value="1"/>
</dbReference>
<dbReference type="PANTHER" id="PTHR45753:SF6">
    <property type="entry name" value="ASPARTATE CARBAMOYLTRANSFERASE"/>
    <property type="match status" value="1"/>
</dbReference>
<dbReference type="PANTHER" id="PTHR45753">
    <property type="entry name" value="ORNITHINE CARBAMOYLTRANSFERASE, MITOCHONDRIAL"/>
    <property type="match status" value="1"/>
</dbReference>
<dbReference type="Pfam" id="PF00185">
    <property type="entry name" value="OTCace"/>
    <property type="match status" value="1"/>
</dbReference>
<dbReference type="Pfam" id="PF02729">
    <property type="entry name" value="OTCace_N"/>
    <property type="match status" value="1"/>
</dbReference>
<dbReference type="PRINTS" id="PR00100">
    <property type="entry name" value="AOTCASE"/>
</dbReference>
<dbReference type="PRINTS" id="PR00101">
    <property type="entry name" value="ATCASE"/>
</dbReference>
<dbReference type="SUPFAM" id="SSF53671">
    <property type="entry name" value="Aspartate/ornithine carbamoyltransferase"/>
    <property type="match status" value="1"/>
</dbReference>
<dbReference type="PROSITE" id="PS00097">
    <property type="entry name" value="CARBAMOYLTRANSFERASE"/>
    <property type="match status" value="1"/>
</dbReference>